<comment type="similarity">
    <text evidence="8">Belongs to the glycosyl hydrolase 1 family.</text>
</comment>
<comment type="caution">
    <text evidence="8">Lacks the conserved Glu residue acting as catalytic proton donor. Its enzyme activity is therefore unsure.</text>
</comment>
<comment type="sequence caution" evidence="8">
    <conflict type="erroneous initiation">
        <sequence resource="EMBL-CDS" id="BAF25554"/>
    </conflict>
    <text>Extended N-terminus.</text>
</comment>
<gene>
    <name type="primary">BGLU33</name>
    <name type="ordered locus">Os09g0511900</name>
    <name type="ordered locus">LOC_Os09g33710</name>
</gene>
<proteinExistence type="evidence at transcript level"/>
<name>BGL33_ORYSJ</name>
<dbReference type="EMBL" id="AP008215">
    <property type="protein sequence ID" value="BAF25554.1"/>
    <property type="status" value="ALT_INIT"/>
    <property type="molecule type" value="Genomic_DNA"/>
</dbReference>
<dbReference type="EMBL" id="AP014965">
    <property type="protein sequence ID" value="BAT08915.1"/>
    <property type="molecule type" value="Genomic_DNA"/>
</dbReference>
<dbReference type="EMBL" id="AK066336">
    <property type="protein sequence ID" value="BAG89921.1"/>
    <property type="molecule type" value="mRNA"/>
</dbReference>
<dbReference type="RefSeq" id="XP_015612393.1">
    <property type="nucleotide sequence ID" value="XM_015756907.1"/>
</dbReference>
<dbReference type="SMR" id="Q0J0G1"/>
<dbReference type="FunCoup" id="Q0J0G1">
    <property type="interactions" value="176"/>
</dbReference>
<dbReference type="STRING" id="39947.Q0J0G1"/>
<dbReference type="CAZy" id="GH1">
    <property type="family name" value="Glycoside Hydrolase Family 1"/>
</dbReference>
<dbReference type="GlyCosmos" id="Q0J0G1">
    <property type="glycosylation" value="2 sites, No reported glycans"/>
</dbReference>
<dbReference type="PaxDb" id="39947-Q0J0G1"/>
<dbReference type="EnsemblPlants" id="Os09t0511900-01">
    <property type="protein sequence ID" value="Os09t0511900-01"/>
    <property type="gene ID" value="Os09g0511900"/>
</dbReference>
<dbReference type="Gramene" id="Os09t0511900-01">
    <property type="protein sequence ID" value="Os09t0511900-01"/>
    <property type="gene ID" value="Os09g0511900"/>
</dbReference>
<dbReference type="KEGG" id="dosa:Os09g0511900"/>
<dbReference type="eggNOG" id="KOG0626">
    <property type="taxonomic scope" value="Eukaryota"/>
</dbReference>
<dbReference type="HOGENOM" id="CLU_001859_1_0_1"/>
<dbReference type="InParanoid" id="Q0J0G1"/>
<dbReference type="OMA" id="TENIQCH"/>
<dbReference type="OrthoDB" id="65569at2759"/>
<dbReference type="Proteomes" id="UP000000763">
    <property type="component" value="Chromosome 9"/>
</dbReference>
<dbReference type="Proteomes" id="UP000059680">
    <property type="component" value="Chromosome 9"/>
</dbReference>
<dbReference type="GO" id="GO:0033907">
    <property type="term" value="F:beta-D-fucosidase activity"/>
    <property type="evidence" value="ECO:0007669"/>
    <property type="project" value="UniProtKB-ARBA"/>
</dbReference>
<dbReference type="GO" id="GO:0004565">
    <property type="term" value="F:beta-galactosidase activity"/>
    <property type="evidence" value="ECO:0007669"/>
    <property type="project" value="UniProtKB-ARBA"/>
</dbReference>
<dbReference type="GO" id="GO:0008422">
    <property type="term" value="F:beta-glucosidase activity"/>
    <property type="evidence" value="ECO:0000318"/>
    <property type="project" value="GO_Central"/>
</dbReference>
<dbReference type="GO" id="GO:0005975">
    <property type="term" value="P:carbohydrate metabolic process"/>
    <property type="evidence" value="ECO:0007669"/>
    <property type="project" value="InterPro"/>
</dbReference>
<dbReference type="FunFam" id="3.20.20.80:FF:000022">
    <property type="entry name" value="Beta-glucosidase 11"/>
    <property type="match status" value="1"/>
</dbReference>
<dbReference type="Gene3D" id="3.20.20.80">
    <property type="entry name" value="Glycosidases"/>
    <property type="match status" value="1"/>
</dbReference>
<dbReference type="InterPro" id="IPR001360">
    <property type="entry name" value="Glyco_hydro_1"/>
</dbReference>
<dbReference type="InterPro" id="IPR033132">
    <property type="entry name" value="Glyco_hydro_1_N_CS"/>
</dbReference>
<dbReference type="InterPro" id="IPR017853">
    <property type="entry name" value="Glycoside_hydrolase_SF"/>
</dbReference>
<dbReference type="PANTHER" id="PTHR10353">
    <property type="entry name" value="GLYCOSYL HYDROLASE"/>
    <property type="match status" value="1"/>
</dbReference>
<dbReference type="PANTHER" id="PTHR10353:SF197">
    <property type="entry name" value="INACTIVE BETA-GLUCOSIDASE 33-RELATED"/>
    <property type="match status" value="1"/>
</dbReference>
<dbReference type="Pfam" id="PF00232">
    <property type="entry name" value="Glyco_hydro_1"/>
    <property type="match status" value="1"/>
</dbReference>
<dbReference type="PRINTS" id="PR00131">
    <property type="entry name" value="GLHYDRLASE1"/>
</dbReference>
<dbReference type="SUPFAM" id="SSF51445">
    <property type="entry name" value="(Trans)glycosidases"/>
    <property type="match status" value="1"/>
</dbReference>
<dbReference type="PROSITE" id="PS00653">
    <property type="entry name" value="GLYCOSYL_HYDROL_F1_2"/>
    <property type="match status" value="1"/>
</dbReference>
<sequence length="503" mass="56842">MATGELALVSSLFIVVVFLLLGAVAREASALTRHDFPEGFVFGAGSSAFQVEGAAAEDGRKPSIWDTFINQGYMPDGSNADVSADQYHHYKEDVKLMYDMGLDAYRFSIAWPRLIPDGRGEINPKGLEYYNNLIDELIMHGIQPHVTIYHFDLPQALQDEYGGILSPRFIEDYSAYAEVCFKNFGDRVKHWATFNQPNIEPIGGFDAGDRPPRRCSYPFGTNCTGGDSSTEPYIVAHHLLLAHASAVSIYRQKYQAIQGGQIGITLMVRWHEPYTDKTADAAAAIRMNEFHIGWFLHPLVHGDYPPVMRSRVGVRLPSITASDSEKIRGSFDFIGINHYYVIFVQSIDANEQKLRDYYIDAGVQGEDDTENIQCHSWSLGKVLNHLKLEYGNPPVMIHENGYSDSPDIFGKINYNDDFRSAFLQGYLEALYLSVRNGSNTRGYFVWSMFDMFEFLYGYRLRFGLCGVDFTAAARTRYLKNSARWYSGFLRGGELRPEKSYATL</sequence>
<reference key="1">
    <citation type="journal article" date="2005" name="Nature">
        <title>The map-based sequence of the rice genome.</title>
        <authorList>
            <consortium name="International rice genome sequencing project (IRGSP)"/>
        </authorList>
    </citation>
    <scope>NUCLEOTIDE SEQUENCE [LARGE SCALE GENOMIC DNA]</scope>
    <source>
        <strain>cv. Nipponbare</strain>
    </source>
</reference>
<reference key="2">
    <citation type="journal article" date="2008" name="Nucleic Acids Res.">
        <title>The rice annotation project database (RAP-DB): 2008 update.</title>
        <authorList>
            <consortium name="The rice annotation project (RAP)"/>
        </authorList>
    </citation>
    <scope>GENOME REANNOTATION</scope>
    <source>
        <strain>cv. Nipponbare</strain>
    </source>
</reference>
<reference key="3">
    <citation type="journal article" date="2013" name="Rice">
        <title>Improvement of the Oryza sativa Nipponbare reference genome using next generation sequence and optical map data.</title>
        <authorList>
            <person name="Kawahara Y."/>
            <person name="de la Bastide M."/>
            <person name="Hamilton J.P."/>
            <person name="Kanamori H."/>
            <person name="McCombie W.R."/>
            <person name="Ouyang S."/>
            <person name="Schwartz D.C."/>
            <person name="Tanaka T."/>
            <person name="Wu J."/>
            <person name="Zhou S."/>
            <person name="Childs K.L."/>
            <person name="Davidson R.M."/>
            <person name="Lin H."/>
            <person name="Quesada-Ocampo L."/>
            <person name="Vaillancourt B."/>
            <person name="Sakai H."/>
            <person name="Lee S.S."/>
            <person name="Kim J."/>
            <person name="Numa H."/>
            <person name="Itoh T."/>
            <person name="Buell C.R."/>
            <person name="Matsumoto T."/>
        </authorList>
    </citation>
    <scope>GENOME REANNOTATION</scope>
    <source>
        <strain>cv. Nipponbare</strain>
    </source>
</reference>
<reference key="4">
    <citation type="journal article" date="2003" name="Science">
        <title>Collection, mapping, and annotation of over 28,000 cDNA clones from japonica rice.</title>
        <authorList>
            <consortium name="The rice full-length cDNA consortium"/>
        </authorList>
    </citation>
    <scope>NUCLEOTIDE SEQUENCE [LARGE SCALE MRNA]</scope>
    <source>
        <strain>cv. Nipponbare</strain>
    </source>
</reference>
<reference key="5">
    <citation type="journal article" date="2006" name="BMC Plant Biol.">
        <title>Analysis of rice glycosyl hydrolase family 1 and expression of Os4bglu12 beta-glucosidase.</title>
        <authorList>
            <person name="Opassiri R."/>
            <person name="Pomthong B."/>
            <person name="Onkoksoong T."/>
            <person name="Akiyama T."/>
            <person name="Esen A."/>
            <person name="Ketudat Cairns J.R."/>
        </authorList>
    </citation>
    <scope>GENE FAMILY</scope>
    <scope>NOMENCLATURE</scope>
</reference>
<organism>
    <name type="scientific">Oryza sativa subsp. japonica</name>
    <name type="common">Rice</name>
    <dbReference type="NCBI Taxonomy" id="39947"/>
    <lineage>
        <taxon>Eukaryota</taxon>
        <taxon>Viridiplantae</taxon>
        <taxon>Streptophyta</taxon>
        <taxon>Embryophyta</taxon>
        <taxon>Tracheophyta</taxon>
        <taxon>Spermatophyta</taxon>
        <taxon>Magnoliopsida</taxon>
        <taxon>Liliopsida</taxon>
        <taxon>Poales</taxon>
        <taxon>Poaceae</taxon>
        <taxon>BOP clade</taxon>
        <taxon>Oryzoideae</taxon>
        <taxon>Oryzeae</taxon>
        <taxon>Oryzinae</taxon>
        <taxon>Oryza</taxon>
        <taxon>Oryza sativa</taxon>
    </lineage>
</organism>
<accession>Q0J0G1</accession>
<accession>A0A0P0XPL7</accession>
<accession>B7EC24</accession>
<feature type="signal peptide" evidence="6">
    <location>
        <begin position="1"/>
        <end position="30"/>
    </location>
</feature>
<feature type="chain" id="PRO_0000390350" description="Probable inactive beta-glucosidase 33">
    <location>
        <begin position="31"/>
        <end position="503"/>
    </location>
</feature>
<feature type="active site" description="Nucleophile" evidence="2">
    <location>
        <position position="399"/>
    </location>
</feature>
<feature type="binding site" evidence="2">
    <location>
        <position position="50"/>
    </location>
    <ligand>
        <name>a beta-D-glucoside</name>
        <dbReference type="ChEBI" id="CHEBI:22798"/>
    </ligand>
</feature>
<feature type="binding site" evidence="2">
    <location>
        <position position="150"/>
    </location>
    <ligand>
        <name>a beta-D-glucoside</name>
        <dbReference type="ChEBI" id="CHEBI:22798"/>
    </ligand>
</feature>
<feature type="binding site" evidence="3">
    <location>
        <begin position="195"/>
        <end position="196"/>
    </location>
    <ligand>
        <name>a beta-D-glucoside</name>
        <dbReference type="ChEBI" id="CHEBI:22798"/>
    </ligand>
</feature>
<feature type="binding site" evidence="2">
    <location>
        <position position="339"/>
    </location>
    <ligand>
        <name>a beta-D-glucoside</name>
        <dbReference type="ChEBI" id="CHEBI:22798"/>
    </ligand>
</feature>
<feature type="binding site" evidence="5">
    <location>
        <position position="399"/>
    </location>
    <ligand>
        <name>a beta-D-glucoside</name>
        <dbReference type="ChEBI" id="CHEBI:22798"/>
    </ligand>
</feature>
<feature type="binding site" evidence="2">
    <location>
        <position position="446"/>
    </location>
    <ligand>
        <name>a beta-D-glucoside</name>
        <dbReference type="ChEBI" id="CHEBI:22798"/>
    </ligand>
</feature>
<feature type="binding site" evidence="4">
    <location>
        <begin position="453"/>
        <end position="454"/>
    </location>
    <ligand>
        <name>a beta-D-glucoside</name>
        <dbReference type="ChEBI" id="CHEBI:22798"/>
    </ligand>
</feature>
<feature type="binding site" evidence="1">
    <location>
        <position position="462"/>
    </location>
    <ligand>
        <name>a beta-D-glucoside</name>
        <dbReference type="ChEBI" id="CHEBI:22798"/>
    </ligand>
</feature>
<feature type="glycosylation site" description="N-linked (GlcNAc...) asparagine" evidence="7">
    <location>
        <position position="222"/>
    </location>
</feature>
<feature type="glycosylation site" description="N-linked (GlcNAc...) asparagine" evidence="7">
    <location>
        <position position="436"/>
    </location>
</feature>
<feature type="disulfide bond" evidence="2">
    <location>
        <begin position="215"/>
        <end position="223"/>
    </location>
</feature>
<protein>
    <recommendedName>
        <fullName>Probable inactive beta-glucosidase 33</fullName>
        <shortName>Os9bglu33</shortName>
    </recommendedName>
</protein>
<keyword id="KW-1015">Disulfide bond</keyword>
<keyword id="KW-0325">Glycoprotein</keyword>
<keyword id="KW-0378">Hydrolase</keyword>
<keyword id="KW-1185">Reference proteome</keyword>
<keyword id="KW-0732">Signal</keyword>
<evidence type="ECO:0000250" key="1">
    <source>
        <dbReference type="UniProtKB" id="Q1XH05"/>
    </source>
</evidence>
<evidence type="ECO:0000250" key="2">
    <source>
        <dbReference type="UniProtKB" id="Q7XSK0"/>
    </source>
</evidence>
<evidence type="ECO:0000250" key="3">
    <source>
        <dbReference type="UniProtKB" id="Q8GU20"/>
    </source>
</evidence>
<evidence type="ECO:0000250" key="4">
    <source>
        <dbReference type="UniProtKB" id="Q8L7J2"/>
    </source>
</evidence>
<evidence type="ECO:0000250" key="5">
    <source>
        <dbReference type="UniProtKB" id="Q9SPP9"/>
    </source>
</evidence>
<evidence type="ECO:0000255" key="6"/>
<evidence type="ECO:0000255" key="7">
    <source>
        <dbReference type="PROSITE-ProRule" id="PRU00498"/>
    </source>
</evidence>
<evidence type="ECO:0000305" key="8"/>